<proteinExistence type="inferred from homology"/>
<keyword id="KW-0173">Coenzyme A biosynthesis</keyword>
<keyword id="KW-0342">GTP-binding</keyword>
<keyword id="KW-0418">Kinase</keyword>
<keyword id="KW-0547">Nucleotide-binding</keyword>
<keyword id="KW-0808">Transferase</keyword>
<dbReference type="EC" id="2.7.1.237" evidence="1"/>
<dbReference type="EMBL" id="CP001400">
    <property type="protein sequence ID" value="ACP38437.1"/>
    <property type="molecule type" value="Genomic_DNA"/>
</dbReference>
<dbReference type="RefSeq" id="WP_012711668.1">
    <property type="nucleotide sequence ID" value="NC_012588.1"/>
</dbReference>
<dbReference type="SMR" id="C3MWY7"/>
<dbReference type="KEGG" id="sia:M1425_1688"/>
<dbReference type="HOGENOM" id="CLU_120795_1_0_2"/>
<dbReference type="UniPathway" id="UPA00241"/>
<dbReference type="Proteomes" id="UP000001350">
    <property type="component" value="Chromosome"/>
</dbReference>
<dbReference type="GO" id="GO:0005525">
    <property type="term" value="F:GTP binding"/>
    <property type="evidence" value="ECO:0007669"/>
    <property type="project" value="UniProtKB-UniRule"/>
</dbReference>
<dbReference type="GO" id="GO:0016301">
    <property type="term" value="F:kinase activity"/>
    <property type="evidence" value="ECO:0007669"/>
    <property type="project" value="UniProtKB-UniRule"/>
</dbReference>
<dbReference type="GO" id="GO:0015937">
    <property type="term" value="P:coenzyme A biosynthetic process"/>
    <property type="evidence" value="ECO:0007669"/>
    <property type="project" value="UniProtKB-UniRule"/>
</dbReference>
<dbReference type="HAMAP" id="MF_00590">
    <property type="entry name" value="Dephospho_CoA_kinase_GTP_dep"/>
    <property type="match status" value="1"/>
</dbReference>
<dbReference type="InterPro" id="IPR007164">
    <property type="entry name" value="GTP-dep_dephospho-CoA_kin"/>
</dbReference>
<dbReference type="PANTHER" id="PTHR40732:SF1">
    <property type="entry name" value="GTP-DEPENDENT DEPHOSPHO-COA KINASE"/>
    <property type="match status" value="1"/>
</dbReference>
<dbReference type="PANTHER" id="PTHR40732">
    <property type="entry name" value="UPF0218 PROTEIN TK1697"/>
    <property type="match status" value="1"/>
</dbReference>
<dbReference type="Pfam" id="PF04019">
    <property type="entry name" value="DUF359"/>
    <property type="match status" value="1"/>
</dbReference>
<dbReference type="PIRSF" id="PIRSF006533">
    <property type="entry name" value="UCP006533"/>
    <property type="match status" value="1"/>
</dbReference>
<organism>
    <name type="scientific">Saccharolobus islandicus (strain M.14.25 / Kamchatka #1)</name>
    <name type="common">Sulfolobus islandicus</name>
    <dbReference type="NCBI Taxonomy" id="427317"/>
    <lineage>
        <taxon>Archaea</taxon>
        <taxon>Thermoproteota</taxon>
        <taxon>Thermoprotei</taxon>
        <taxon>Sulfolobales</taxon>
        <taxon>Sulfolobaceae</taxon>
        <taxon>Saccharolobus</taxon>
    </lineage>
</organism>
<sequence length="179" mass="20383">MEIRDNNKVNLCFAFDNLRKELSRPYGILFTNNKVFLDFVSKSIQQGFKVITVGDYVSRVLEENGIIPFLEVIDGKTKRSIPQHRAIVKNKEYRVTNEAGKIRFEIFEIIENILKDRDGGVVFVNGEEDLLVIPVILSANNGDIVIYGQPNAGAVVIIVNEMIKWRVRDILEKAVVEEC</sequence>
<comment type="function">
    <text evidence="1">Catalyzes the GTP-dependent phosphorylation of the 3'-hydroxyl group of dephosphocoenzyme A to form coenzyme A (CoA).</text>
</comment>
<comment type="catalytic activity">
    <reaction evidence="1">
        <text>3'-dephospho-CoA + GTP = GDP + CoA + H(+)</text>
        <dbReference type="Rhea" id="RHEA:61156"/>
        <dbReference type="ChEBI" id="CHEBI:15378"/>
        <dbReference type="ChEBI" id="CHEBI:37565"/>
        <dbReference type="ChEBI" id="CHEBI:57287"/>
        <dbReference type="ChEBI" id="CHEBI:57328"/>
        <dbReference type="ChEBI" id="CHEBI:58189"/>
        <dbReference type="EC" id="2.7.1.237"/>
    </reaction>
</comment>
<comment type="pathway">
    <text evidence="1">Cofactor biosynthesis; coenzyme A biosynthesis.</text>
</comment>
<comment type="similarity">
    <text evidence="1">Belongs to the GTP-dependent DPCK family.</text>
</comment>
<accession>C3MWY7</accession>
<feature type="chain" id="PRO_1000212167" description="GTP-dependent dephospho-CoA kinase">
    <location>
        <begin position="1"/>
        <end position="179"/>
    </location>
</feature>
<feature type="binding site" evidence="1">
    <location>
        <position position="55"/>
    </location>
    <ligand>
        <name>GTP</name>
        <dbReference type="ChEBI" id="CHEBI:37565"/>
    </ligand>
</feature>
<feature type="binding site" evidence="1">
    <location>
        <position position="57"/>
    </location>
    <ligand>
        <name>GTP</name>
        <dbReference type="ChEBI" id="CHEBI:37565"/>
    </ligand>
</feature>
<feature type="binding site" evidence="1">
    <location>
        <position position="74"/>
    </location>
    <ligand>
        <name>GTP</name>
        <dbReference type="ChEBI" id="CHEBI:37565"/>
    </ligand>
</feature>
<feature type="binding site" evidence="1">
    <location>
        <position position="76"/>
    </location>
    <ligand>
        <name>GTP</name>
        <dbReference type="ChEBI" id="CHEBI:37565"/>
    </ligand>
</feature>
<feature type="binding site" evidence="1">
    <location>
        <position position="128"/>
    </location>
    <ligand>
        <name>GTP</name>
        <dbReference type="ChEBI" id="CHEBI:37565"/>
    </ligand>
</feature>
<protein>
    <recommendedName>
        <fullName evidence="1">GTP-dependent dephospho-CoA kinase</fullName>
        <ecNumber evidence="1">2.7.1.237</ecNumber>
    </recommendedName>
    <alternativeName>
        <fullName evidence="1">Dephospho-coenzyme A kinase</fullName>
        <shortName evidence="1">DPCK</shortName>
    </alternativeName>
</protein>
<name>DPCKG_SACI4</name>
<evidence type="ECO:0000255" key="1">
    <source>
        <dbReference type="HAMAP-Rule" id="MF_00590"/>
    </source>
</evidence>
<reference key="1">
    <citation type="journal article" date="2009" name="Proc. Natl. Acad. Sci. U.S.A.">
        <title>Biogeography of the Sulfolobus islandicus pan-genome.</title>
        <authorList>
            <person name="Reno M.L."/>
            <person name="Held N.L."/>
            <person name="Fields C.J."/>
            <person name="Burke P.V."/>
            <person name="Whitaker R.J."/>
        </authorList>
    </citation>
    <scope>NUCLEOTIDE SEQUENCE [LARGE SCALE GENOMIC DNA]</scope>
    <source>
        <strain>M.14.25 / Kamchatka #1</strain>
    </source>
</reference>
<gene>
    <name type="ordered locus">M1425_1688</name>
</gene>